<organism>
    <name type="scientific">Rattus norvegicus</name>
    <name type="common">Rat</name>
    <dbReference type="NCBI Taxonomy" id="10116"/>
    <lineage>
        <taxon>Eukaryota</taxon>
        <taxon>Metazoa</taxon>
        <taxon>Chordata</taxon>
        <taxon>Craniata</taxon>
        <taxon>Vertebrata</taxon>
        <taxon>Euteleostomi</taxon>
        <taxon>Mammalia</taxon>
        <taxon>Eutheria</taxon>
        <taxon>Euarchontoglires</taxon>
        <taxon>Glires</taxon>
        <taxon>Rodentia</taxon>
        <taxon>Myomorpha</taxon>
        <taxon>Muroidea</taxon>
        <taxon>Muridae</taxon>
        <taxon>Murinae</taxon>
        <taxon>Rattus</taxon>
    </lineage>
</organism>
<name>FXL20_RAT</name>
<accession>Q9QZH7</accession>
<proteinExistence type="evidence at protein level"/>
<comment type="function">
    <text evidence="1">Substrate-recognition component of the SCF (SKP1-CUL1-F-box protein)-type E3 ubiquitin ligase complex. Role in neural transmission (By similarity).</text>
</comment>
<comment type="subunit">
    <text evidence="1">Interacts with SKP1 and CUL1.</text>
</comment>
<comment type="subcellular location">
    <subcellularLocation>
        <location evidence="3">Cytoplasm</location>
    </subcellularLocation>
</comment>
<comment type="tissue specificity">
    <text evidence="3">Widely expressed, with highest expression in skeletal muscle, heart and brain.</text>
</comment>
<protein>
    <recommendedName>
        <fullName>F-box/LRR-repeat protein 20</fullName>
    </recommendedName>
    <alternativeName>
        <fullName>F-box and leucine-rich repeat protein 20</fullName>
    </alternativeName>
    <alternativeName>
        <fullName>F-box/LRR-repeat protein 2-like</fullName>
    </alternativeName>
</protein>
<feature type="chain" id="PRO_0000119872" description="F-box/LRR-repeat protein 20">
    <location>
        <begin position="1"/>
        <end position="276"/>
    </location>
</feature>
<feature type="domain" description="F-box" evidence="2">
    <location>
        <begin position="22"/>
        <end position="68"/>
    </location>
</feature>
<feature type="repeat" description="LRR 1">
    <location>
        <begin position="74"/>
        <end position="100"/>
    </location>
</feature>
<feature type="repeat" description="LRR 2">
    <location>
        <begin position="101"/>
        <end position="126"/>
    </location>
</feature>
<feature type="repeat" description="LRR 3">
    <location>
        <begin position="127"/>
        <end position="152"/>
    </location>
</feature>
<feature type="repeat" description="LRR 4">
    <location>
        <begin position="153"/>
        <end position="178"/>
    </location>
</feature>
<feature type="repeat" description="LRR 5">
    <location>
        <begin position="179"/>
        <end position="204"/>
    </location>
</feature>
<feature type="repeat" description="LRR 6">
    <location>
        <begin position="205"/>
        <end position="230"/>
    </location>
</feature>
<feature type="repeat" description="LRR 7">
    <location>
        <begin position="231"/>
        <end position="256"/>
    </location>
</feature>
<feature type="repeat" description="LRR 8">
    <location>
        <begin position="257"/>
        <end position="276"/>
    </location>
</feature>
<dbReference type="EMBL" id="AF182443">
    <property type="protein sequence ID" value="AAF01221.1"/>
    <property type="molecule type" value="mRNA"/>
</dbReference>
<dbReference type="PIR" id="T52349">
    <property type="entry name" value="T52349"/>
</dbReference>
<dbReference type="RefSeq" id="NP_071608.1">
    <property type="nucleotide sequence ID" value="NM_022272.1"/>
</dbReference>
<dbReference type="SMR" id="Q9QZH7"/>
<dbReference type="STRING" id="10116.ENSRNOP00000060552"/>
<dbReference type="PhosphoSitePlus" id="Q9QZH7"/>
<dbReference type="SwissPalm" id="Q9QZH7"/>
<dbReference type="PaxDb" id="10116-ENSRNOP00000060552"/>
<dbReference type="UCSC" id="RGD:621722">
    <property type="organism name" value="rat"/>
</dbReference>
<dbReference type="AGR" id="RGD:621722"/>
<dbReference type="RGD" id="621722">
    <property type="gene designation" value="Fbxl20"/>
</dbReference>
<dbReference type="eggNOG" id="KOG4341">
    <property type="taxonomic scope" value="Eukaryota"/>
</dbReference>
<dbReference type="HOGENOM" id="CLU_016072_7_1_1"/>
<dbReference type="InParanoid" id="Q9QZH7"/>
<dbReference type="PhylomeDB" id="Q9QZH7"/>
<dbReference type="PRO" id="PR:Q9QZH7"/>
<dbReference type="Proteomes" id="UP000002494">
    <property type="component" value="Unplaced"/>
</dbReference>
<dbReference type="GO" id="GO:0005737">
    <property type="term" value="C:cytoplasm"/>
    <property type="evidence" value="ECO:0000318"/>
    <property type="project" value="GO_Central"/>
</dbReference>
<dbReference type="GO" id="GO:0098978">
    <property type="term" value="C:glutamatergic synapse"/>
    <property type="evidence" value="ECO:0000266"/>
    <property type="project" value="RGD"/>
</dbReference>
<dbReference type="GO" id="GO:0098793">
    <property type="term" value="C:presynapse"/>
    <property type="evidence" value="ECO:0007669"/>
    <property type="project" value="GOC"/>
</dbReference>
<dbReference type="GO" id="GO:0098685">
    <property type="term" value="C:Schaffer collateral - CA1 synapse"/>
    <property type="evidence" value="ECO:0000266"/>
    <property type="project" value="RGD"/>
</dbReference>
<dbReference type="GO" id="GO:0045202">
    <property type="term" value="C:synapse"/>
    <property type="evidence" value="ECO:0000266"/>
    <property type="project" value="RGD"/>
</dbReference>
<dbReference type="GO" id="GO:0001662">
    <property type="term" value="P:behavioral fear response"/>
    <property type="evidence" value="ECO:0000266"/>
    <property type="project" value="RGD"/>
</dbReference>
<dbReference type="GO" id="GO:0099575">
    <property type="term" value="P:regulation of protein catabolic process at presynapse, modulating synaptic transmission"/>
    <property type="evidence" value="ECO:0000266"/>
    <property type="project" value="RGD"/>
</dbReference>
<dbReference type="GO" id="GO:2000300">
    <property type="term" value="P:regulation of synaptic vesicle exocytosis"/>
    <property type="evidence" value="ECO:0000266"/>
    <property type="project" value="RGD"/>
</dbReference>
<dbReference type="CDD" id="cd22115">
    <property type="entry name" value="F-box_FBXL2-like"/>
    <property type="match status" value="1"/>
</dbReference>
<dbReference type="FunFam" id="3.80.10.10:FF:000042">
    <property type="entry name" value="F-box/LRR-repeat protein 20 isoform 2"/>
    <property type="match status" value="1"/>
</dbReference>
<dbReference type="FunFam" id="1.20.1280.50:FF:000013">
    <property type="entry name" value="F-box/LRR-repeat protein 20 isoform X1"/>
    <property type="match status" value="1"/>
</dbReference>
<dbReference type="Gene3D" id="3.80.10.10">
    <property type="entry name" value="Ribonuclease Inhibitor"/>
    <property type="match status" value="1"/>
</dbReference>
<dbReference type="InterPro" id="IPR001810">
    <property type="entry name" value="F-box_dom"/>
</dbReference>
<dbReference type="InterPro" id="IPR001611">
    <property type="entry name" value="Leu-rich_rpt"/>
</dbReference>
<dbReference type="InterPro" id="IPR006553">
    <property type="entry name" value="Leu-rich_rpt_Cys-con_subtyp"/>
</dbReference>
<dbReference type="InterPro" id="IPR032675">
    <property type="entry name" value="LRR_dom_sf"/>
</dbReference>
<dbReference type="PANTHER" id="PTHR13318:SF95">
    <property type="entry name" value="F-BOX PROTEIN YLR352W"/>
    <property type="match status" value="1"/>
</dbReference>
<dbReference type="PANTHER" id="PTHR13318">
    <property type="entry name" value="PARTNER OF PAIRED, ISOFORM B-RELATED"/>
    <property type="match status" value="1"/>
</dbReference>
<dbReference type="Pfam" id="PF12937">
    <property type="entry name" value="F-box-like"/>
    <property type="match status" value="1"/>
</dbReference>
<dbReference type="Pfam" id="PF13516">
    <property type="entry name" value="LRR_6"/>
    <property type="match status" value="3"/>
</dbReference>
<dbReference type="SMART" id="SM00256">
    <property type="entry name" value="FBOX"/>
    <property type="match status" value="1"/>
</dbReference>
<dbReference type="SMART" id="SM00367">
    <property type="entry name" value="LRR_CC"/>
    <property type="match status" value="7"/>
</dbReference>
<dbReference type="SUPFAM" id="SSF52047">
    <property type="entry name" value="RNI-like"/>
    <property type="match status" value="1"/>
</dbReference>
<dbReference type="PROSITE" id="PS50181">
    <property type="entry name" value="FBOX"/>
    <property type="match status" value="1"/>
</dbReference>
<evidence type="ECO:0000250" key="1"/>
<evidence type="ECO:0000255" key="2">
    <source>
        <dbReference type="PROSITE-ProRule" id="PRU00080"/>
    </source>
</evidence>
<evidence type="ECO:0000269" key="3">
    <source>
    </source>
</evidence>
<reference key="1">
    <citation type="journal article" date="1999" name="FEBS Lett.">
        <title>Identification of a novel Skp2-like mammalian protein containing F-box and leucine-rich repeats.</title>
        <authorList>
            <person name="Ilyin G.P."/>
            <person name="Rialland M."/>
            <person name="Glaise D."/>
            <person name="Guguen-Guillouzo C."/>
        </authorList>
    </citation>
    <scope>NUCLEOTIDE SEQUENCE [MRNA]</scope>
    <scope>INTERACTION WITH SKP1</scope>
    <scope>SUBCELLULAR LOCATION</scope>
    <scope>TISSUE SPECIFICITY</scope>
    <source>
        <strain>Buffalo</strain>
        <tissue>Liver</tissue>
    </source>
</reference>
<keyword id="KW-0963">Cytoplasm</keyword>
<keyword id="KW-0433">Leucine-rich repeat</keyword>
<keyword id="KW-1185">Reference proteome</keyword>
<keyword id="KW-0677">Repeat</keyword>
<keyword id="KW-0833">Ubl conjugation pathway</keyword>
<gene>
    <name type="primary">Fbxl20</name>
    <name type="synonym">Fbl2</name>
</gene>
<sequence length="276" mass="30460">MRRDVNGVTKSRFEMFSNSDEAVINKKLPKELLLRIFSFLDVVTLCRCAQVSRAWNVLALDGSNWQRIDLFDFQRDIEGRVVENISKRCGGFLRKLSLRGCLGVGDNALRTFAQNCRNIEVLSLNGCTKTTDATCTSLSKFCSKLRHLDLASCTSITNMSLKALSEGCPLLEQLNISWCDQVTKDGIQALVRGCGGLKALFLKGCTQLEDEALKYIGAHCPELVTLNLQTCLQITDEGLITICRGCHKLQSLCASGCSNITDAILNALGQNCPRLR</sequence>